<protein>
    <recommendedName>
        <fullName evidence="1">Large ribosomal subunit protein bL36</fullName>
    </recommendedName>
    <alternativeName>
        <fullName evidence="2">50S ribosomal protein L36</fullName>
    </alternativeName>
</protein>
<gene>
    <name evidence="1" type="primary">rpmJ</name>
    <name type="ordered locus">ZMO1246</name>
</gene>
<accession>Q5NN40</accession>
<dbReference type="EMBL" id="AE008692">
    <property type="protein sequence ID" value="AAV89870.2"/>
    <property type="status" value="ALT_INIT"/>
    <property type="molecule type" value="Genomic_DNA"/>
</dbReference>
<dbReference type="SMR" id="Q5NN40"/>
<dbReference type="STRING" id="264203.ZMO1246"/>
<dbReference type="KEGG" id="zmo:ZMO1246"/>
<dbReference type="eggNOG" id="COG0257">
    <property type="taxonomic scope" value="Bacteria"/>
</dbReference>
<dbReference type="HOGENOM" id="CLU_135723_3_0_5"/>
<dbReference type="Proteomes" id="UP000001173">
    <property type="component" value="Chromosome"/>
</dbReference>
<dbReference type="GO" id="GO:1990904">
    <property type="term" value="C:ribonucleoprotein complex"/>
    <property type="evidence" value="ECO:0007669"/>
    <property type="project" value="UniProtKB-KW"/>
</dbReference>
<dbReference type="GO" id="GO:0005840">
    <property type="term" value="C:ribosome"/>
    <property type="evidence" value="ECO:0007669"/>
    <property type="project" value="UniProtKB-KW"/>
</dbReference>
<dbReference type="GO" id="GO:0003735">
    <property type="term" value="F:structural constituent of ribosome"/>
    <property type="evidence" value="ECO:0007669"/>
    <property type="project" value="InterPro"/>
</dbReference>
<dbReference type="GO" id="GO:0006412">
    <property type="term" value="P:translation"/>
    <property type="evidence" value="ECO:0007669"/>
    <property type="project" value="UniProtKB-UniRule"/>
</dbReference>
<dbReference type="HAMAP" id="MF_00251">
    <property type="entry name" value="Ribosomal_bL36"/>
    <property type="match status" value="1"/>
</dbReference>
<dbReference type="InterPro" id="IPR000473">
    <property type="entry name" value="Ribosomal_bL36"/>
</dbReference>
<dbReference type="InterPro" id="IPR035977">
    <property type="entry name" value="Ribosomal_bL36_sp"/>
</dbReference>
<dbReference type="InterPro" id="IPR047621">
    <property type="entry name" value="Ribosomal_L36_bact"/>
</dbReference>
<dbReference type="NCBIfam" id="NF002021">
    <property type="entry name" value="PRK00831.1"/>
    <property type="match status" value="1"/>
</dbReference>
<dbReference type="PANTHER" id="PTHR47781">
    <property type="entry name" value="50S RIBOSOMAL PROTEIN L36 2"/>
    <property type="match status" value="1"/>
</dbReference>
<dbReference type="PANTHER" id="PTHR47781:SF1">
    <property type="entry name" value="LARGE RIBOSOMAL SUBUNIT PROTEIN BL36B"/>
    <property type="match status" value="1"/>
</dbReference>
<dbReference type="Pfam" id="PF00444">
    <property type="entry name" value="Ribosomal_L36"/>
    <property type="match status" value="1"/>
</dbReference>
<dbReference type="SUPFAM" id="SSF57840">
    <property type="entry name" value="Ribosomal protein L36"/>
    <property type="match status" value="1"/>
</dbReference>
<reference key="1">
    <citation type="journal article" date="2005" name="Nat. Biotechnol.">
        <title>The genome sequence of the ethanologenic bacterium Zymomonas mobilis ZM4.</title>
        <authorList>
            <person name="Seo J.-S."/>
            <person name="Chong H."/>
            <person name="Park H.S."/>
            <person name="Yoon K.-O."/>
            <person name="Jung C."/>
            <person name="Kim J.J."/>
            <person name="Hong J.H."/>
            <person name="Kim H."/>
            <person name="Kim J.-H."/>
            <person name="Kil J.-I."/>
            <person name="Park C.J."/>
            <person name="Oh H.-M."/>
            <person name="Lee J.-S."/>
            <person name="Jin S.-J."/>
            <person name="Um H.-W."/>
            <person name="Lee H.-J."/>
            <person name="Oh S.-J."/>
            <person name="Kim J.Y."/>
            <person name="Kang H.L."/>
            <person name="Lee S.Y."/>
            <person name="Lee K.J."/>
            <person name="Kang H.S."/>
        </authorList>
    </citation>
    <scope>NUCLEOTIDE SEQUENCE [LARGE SCALE GENOMIC DNA]</scope>
    <source>
        <strain>ATCC 31821 / ZM4 / CP4</strain>
    </source>
</reference>
<organism>
    <name type="scientific">Zymomonas mobilis subsp. mobilis (strain ATCC 31821 / ZM4 / CP4)</name>
    <dbReference type="NCBI Taxonomy" id="264203"/>
    <lineage>
        <taxon>Bacteria</taxon>
        <taxon>Pseudomonadati</taxon>
        <taxon>Pseudomonadota</taxon>
        <taxon>Alphaproteobacteria</taxon>
        <taxon>Sphingomonadales</taxon>
        <taxon>Zymomonadaceae</taxon>
        <taxon>Zymomonas</taxon>
    </lineage>
</organism>
<proteinExistence type="inferred from homology"/>
<keyword id="KW-1185">Reference proteome</keyword>
<keyword id="KW-0687">Ribonucleoprotein</keyword>
<keyword id="KW-0689">Ribosomal protein</keyword>
<evidence type="ECO:0000255" key="1">
    <source>
        <dbReference type="HAMAP-Rule" id="MF_00251"/>
    </source>
</evidence>
<evidence type="ECO:0000305" key="2"/>
<feature type="chain" id="PRO_0000302338" description="Large ribosomal subunit protein bL36">
    <location>
        <begin position="1"/>
        <end position="41"/>
    </location>
</feature>
<comment type="similarity">
    <text evidence="1">Belongs to the bacterial ribosomal protein bL36 family.</text>
</comment>
<comment type="sequence caution" evidence="2">
    <conflict type="erroneous initiation">
        <sequence resource="EMBL-CDS" id="AAV89870"/>
    </conflict>
</comment>
<name>RL36_ZYMMO</name>
<sequence length="41" mass="5037">MKIRNSLKSLKGRHRDNRVIRRRGRTYIINKTVRRFKARQG</sequence>